<evidence type="ECO:0000255" key="1">
    <source>
        <dbReference type="HAMAP-Rule" id="MF_00318"/>
    </source>
</evidence>
<dbReference type="EC" id="4.2.1.11" evidence="1"/>
<dbReference type="EMBL" id="AL935263">
    <property type="protein sequence ID" value="CCC79181.1"/>
    <property type="molecule type" value="Genomic_DNA"/>
</dbReference>
<dbReference type="RefSeq" id="WP_011101591.1">
    <property type="nucleotide sequence ID" value="NC_004567.2"/>
</dbReference>
<dbReference type="RefSeq" id="YP_004889695.1">
    <property type="nucleotide sequence ID" value="NC_004567.2"/>
</dbReference>
<dbReference type="SMR" id="Q88VW2"/>
<dbReference type="STRING" id="220668.lp_1920"/>
<dbReference type="EnsemblBacteria" id="CCC79181">
    <property type="protein sequence ID" value="CCC79181"/>
    <property type="gene ID" value="lp_1920"/>
</dbReference>
<dbReference type="KEGG" id="lpl:lp_1920"/>
<dbReference type="PATRIC" id="fig|220668.9.peg.1618"/>
<dbReference type="eggNOG" id="COG0148">
    <property type="taxonomic scope" value="Bacteria"/>
</dbReference>
<dbReference type="HOGENOM" id="CLU_031223_2_1_9"/>
<dbReference type="OrthoDB" id="9804716at2"/>
<dbReference type="PhylomeDB" id="Q88VW2"/>
<dbReference type="UniPathway" id="UPA00109">
    <property type="reaction ID" value="UER00187"/>
</dbReference>
<dbReference type="Proteomes" id="UP000000432">
    <property type="component" value="Chromosome"/>
</dbReference>
<dbReference type="GO" id="GO:0009986">
    <property type="term" value="C:cell surface"/>
    <property type="evidence" value="ECO:0007669"/>
    <property type="project" value="UniProtKB-SubCell"/>
</dbReference>
<dbReference type="GO" id="GO:0005576">
    <property type="term" value="C:extracellular region"/>
    <property type="evidence" value="ECO:0007669"/>
    <property type="project" value="UniProtKB-SubCell"/>
</dbReference>
<dbReference type="GO" id="GO:0000015">
    <property type="term" value="C:phosphopyruvate hydratase complex"/>
    <property type="evidence" value="ECO:0007669"/>
    <property type="project" value="InterPro"/>
</dbReference>
<dbReference type="GO" id="GO:0001968">
    <property type="term" value="F:fibronectin binding"/>
    <property type="evidence" value="ECO:0000353"/>
    <property type="project" value="CAFA"/>
</dbReference>
<dbReference type="GO" id="GO:0000287">
    <property type="term" value="F:magnesium ion binding"/>
    <property type="evidence" value="ECO:0007669"/>
    <property type="project" value="UniProtKB-UniRule"/>
</dbReference>
<dbReference type="GO" id="GO:0004634">
    <property type="term" value="F:phosphopyruvate hydratase activity"/>
    <property type="evidence" value="ECO:0007669"/>
    <property type="project" value="UniProtKB-UniRule"/>
</dbReference>
<dbReference type="GO" id="GO:0006096">
    <property type="term" value="P:glycolytic process"/>
    <property type="evidence" value="ECO:0007669"/>
    <property type="project" value="UniProtKB-UniRule"/>
</dbReference>
<dbReference type="CDD" id="cd03313">
    <property type="entry name" value="enolase"/>
    <property type="match status" value="1"/>
</dbReference>
<dbReference type="FunFam" id="3.30.390.10:FF:000001">
    <property type="entry name" value="Enolase"/>
    <property type="match status" value="1"/>
</dbReference>
<dbReference type="Gene3D" id="3.20.20.120">
    <property type="entry name" value="Enolase-like C-terminal domain"/>
    <property type="match status" value="1"/>
</dbReference>
<dbReference type="Gene3D" id="3.30.390.10">
    <property type="entry name" value="Enolase-like, N-terminal domain"/>
    <property type="match status" value="1"/>
</dbReference>
<dbReference type="HAMAP" id="MF_00318">
    <property type="entry name" value="Enolase"/>
    <property type="match status" value="1"/>
</dbReference>
<dbReference type="InterPro" id="IPR000941">
    <property type="entry name" value="Enolase"/>
</dbReference>
<dbReference type="InterPro" id="IPR036849">
    <property type="entry name" value="Enolase-like_C_sf"/>
</dbReference>
<dbReference type="InterPro" id="IPR029017">
    <property type="entry name" value="Enolase-like_N"/>
</dbReference>
<dbReference type="InterPro" id="IPR020810">
    <property type="entry name" value="Enolase_C"/>
</dbReference>
<dbReference type="InterPro" id="IPR020809">
    <property type="entry name" value="Enolase_CS"/>
</dbReference>
<dbReference type="InterPro" id="IPR020811">
    <property type="entry name" value="Enolase_N"/>
</dbReference>
<dbReference type="NCBIfam" id="TIGR01060">
    <property type="entry name" value="eno"/>
    <property type="match status" value="1"/>
</dbReference>
<dbReference type="PANTHER" id="PTHR11902">
    <property type="entry name" value="ENOLASE"/>
    <property type="match status" value="1"/>
</dbReference>
<dbReference type="PANTHER" id="PTHR11902:SF1">
    <property type="entry name" value="ENOLASE"/>
    <property type="match status" value="1"/>
</dbReference>
<dbReference type="Pfam" id="PF00113">
    <property type="entry name" value="Enolase_C"/>
    <property type="match status" value="1"/>
</dbReference>
<dbReference type="Pfam" id="PF03952">
    <property type="entry name" value="Enolase_N"/>
    <property type="match status" value="1"/>
</dbReference>
<dbReference type="PIRSF" id="PIRSF001400">
    <property type="entry name" value="Enolase"/>
    <property type="match status" value="1"/>
</dbReference>
<dbReference type="PRINTS" id="PR00148">
    <property type="entry name" value="ENOLASE"/>
</dbReference>
<dbReference type="SFLD" id="SFLDS00001">
    <property type="entry name" value="Enolase"/>
    <property type="match status" value="1"/>
</dbReference>
<dbReference type="SFLD" id="SFLDF00002">
    <property type="entry name" value="enolase"/>
    <property type="match status" value="1"/>
</dbReference>
<dbReference type="SMART" id="SM01192">
    <property type="entry name" value="Enolase_C"/>
    <property type="match status" value="1"/>
</dbReference>
<dbReference type="SMART" id="SM01193">
    <property type="entry name" value="Enolase_N"/>
    <property type="match status" value="1"/>
</dbReference>
<dbReference type="SUPFAM" id="SSF51604">
    <property type="entry name" value="Enolase C-terminal domain-like"/>
    <property type="match status" value="1"/>
</dbReference>
<dbReference type="SUPFAM" id="SSF54826">
    <property type="entry name" value="Enolase N-terminal domain-like"/>
    <property type="match status" value="1"/>
</dbReference>
<dbReference type="PROSITE" id="PS00164">
    <property type="entry name" value="ENOLASE"/>
    <property type="match status" value="1"/>
</dbReference>
<feature type="chain" id="PRO_0000133907" description="Enolase 2">
    <location>
        <begin position="1"/>
        <end position="429"/>
    </location>
</feature>
<feature type="active site" description="Proton donor" evidence="1">
    <location>
        <position position="205"/>
    </location>
</feature>
<feature type="active site" description="Proton acceptor" evidence="1">
    <location>
        <position position="338"/>
    </location>
</feature>
<feature type="binding site" evidence="1">
    <location>
        <position position="163"/>
    </location>
    <ligand>
        <name>(2R)-2-phosphoglycerate</name>
        <dbReference type="ChEBI" id="CHEBI:58289"/>
    </ligand>
</feature>
<feature type="binding site" evidence="1">
    <location>
        <position position="242"/>
    </location>
    <ligand>
        <name>Mg(2+)</name>
        <dbReference type="ChEBI" id="CHEBI:18420"/>
    </ligand>
</feature>
<feature type="binding site" evidence="1">
    <location>
        <position position="286"/>
    </location>
    <ligand>
        <name>Mg(2+)</name>
        <dbReference type="ChEBI" id="CHEBI:18420"/>
    </ligand>
</feature>
<feature type="binding site" evidence="1">
    <location>
        <position position="313"/>
    </location>
    <ligand>
        <name>Mg(2+)</name>
        <dbReference type="ChEBI" id="CHEBI:18420"/>
    </ligand>
</feature>
<feature type="binding site" evidence="1">
    <location>
        <position position="338"/>
    </location>
    <ligand>
        <name>(2R)-2-phosphoglycerate</name>
        <dbReference type="ChEBI" id="CHEBI:58289"/>
    </ligand>
</feature>
<feature type="binding site" evidence="1">
    <location>
        <position position="367"/>
    </location>
    <ligand>
        <name>(2R)-2-phosphoglycerate</name>
        <dbReference type="ChEBI" id="CHEBI:58289"/>
    </ligand>
</feature>
<feature type="binding site" evidence="1">
    <location>
        <position position="368"/>
    </location>
    <ligand>
        <name>(2R)-2-phosphoglycerate</name>
        <dbReference type="ChEBI" id="CHEBI:58289"/>
    </ligand>
</feature>
<feature type="binding site" evidence="1">
    <location>
        <position position="389"/>
    </location>
    <ligand>
        <name>(2R)-2-phosphoglycerate</name>
        <dbReference type="ChEBI" id="CHEBI:58289"/>
    </ligand>
</feature>
<keyword id="KW-0963">Cytoplasm</keyword>
<keyword id="KW-0324">Glycolysis</keyword>
<keyword id="KW-0456">Lyase</keyword>
<keyword id="KW-0460">Magnesium</keyword>
<keyword id="KW-0479">Metal-binding</keyword>
<keyword id="KW-1185">Reference proteome</keyword>
<keyword id="KW-0964">Secreted</keyword>
<proteinExistence type="inferred from homology"/>
<name>ENO2_LACPL</name>
<sequence length="429" mass="46621">MEKQVIETVKAREIFDSRGNPTVEADVILSDGTLGRAEVPSGASTGEKEAVELRDGGDRLAGKGVLKAVNNVNTVINHALHGADPFNQAHIDQIMIDLDGTPNKARLGANAILGVSMATARAAANALQQPLYRYLGGTDLELPQTFHNVINGGEHADNGIDIQEFMITPVERTSFRDGFEKIVNTYHTLKKVIEDAGYTSGLGDEGGFAPDLKNSEEALQMLHDAIIKAGYTPGKEIAIAFDAAASYFYNRTTHNYDFEGKTYTPAALGDYYLQLLAKFPEIVSIEDPYGEEDWDNFASFTAAHGDQLQIVADDPVCTNPQLIRQAIQRGMANNILIKLNQIGTVTETLAAIRLARKNGYATMMSHRSGETGDTFVADFTVATNAAQLKAGAPARSERVEKYNQLLRIEEELGADGARLAHFPNNVMFD</sequence>
<gene>
    <name evidence="1" type="primary">eno2</name>
    <name type="synonym">enoA2</name>
    <name type="synonym">enoB</name>
    <name type="ordered locus">lp_1920</name>
</gene>
<comment type="function">
    <text evidence="1">Catalyzes the reversible conversion of 2-phosphoglycerate (2-PG) into phosphoenolpyruvate (PEP). It is essential for the degradation of carbohydrates via glycolysis.</text>
</comment>
<comment type="catalytic activity">
    <reaction evidence="1">
        <text>(2R)-2-phosphoglycerate = phosphoenolpyruvate + H2O</text>
        <dbReference type="Rhea" id="RHEA:10164"/>
        <dbReference type="ChEBI" id="CHEBI:15377"/>
        <dbReference type="ChEBI" id="CHEBI:58289"/>
        <dbReference type="ChEBI" id="CHEBI:58702"/>
        <dbReference type="EC" id="4.2.1.11"/>
    </reaction>
</comment>
<comment type="cofactor">
    <cofactor evidence="1">
        <name>Mg(2+)</name>
        <dbReference type="ChEBI" id="CHEBI:18420"/>
    </cofactor>
    <text evidence="1">Binds a second Mg(2+) ion via substrate during catalysis.</text>
</comment>
<comment type="pathway">
    <text evidence="1">Carbohydrate degradation; glycolysis; pyruvate from D-glyceraldehyde 3-phosphate: step 4/5.</text>
</comment>
<comment type="subcellular location">
    <subcellularLocation>
        <location evidence="1">Cytoplasm</location>
    </subcellularLocation>
    <subcellularLocation>
        <location evidence="1">Secreted</location>
    </subcellularLocation>
    <subcellularLocation>
        <location evidence="1">Cell surface</location>
    </subcellularLocation>
    <text evidence="1">Fractions of enolase are present in both the cytoplasm and on the cell surface.</text>
</comment>
<comment type="similarity">
    <text evidence="1">Belongs to the enolase family.</text>
</comment>
<organism>
    <name type="scientific">Lactiplantibacillus plantarum (strain ATCC BAA-793 / NCIMB 8826 / WCFS1)</name>
    <name type="common">Lactobacillus plantarum</name>
    <dbReference type="NCBI Taxonomy" id="220668"/>
    <lineage>
        <taxon>Bacteria</taxon>
        <taxon>Bacillati</taxon>
        <taxon>Bacillota</taxon>
        <taxon>Bacilli</taxon>
        <taxon>Lactobacillales</taxon>
        <taxon>Lactobacillaceae</taxon>
        <taxon>Lactiplantibacillus</taxon>
    </lineage>
</organism>
<protein>
    <recommendedName>
        <fullName evidence="1">Enolase 2</fullName>
        <ecNumber evidence="1">4.2.1.11</ecNumber>
    </recommendedName>
    <alternativeName>
        <fullName evidence="1">2-phospho-D-glycerate hydro-lyase 2</fullName>
    </alternativeName>
    <alternativeName>
        <fullName evidence="1">2-phosphoglycerate dehydratase 2</fullName>
    </alternativeName>
</protein>
<reference key="1">
    <citation type="journal article" date="2003" name="Proc. Natl. Acad. Sci. U.S.A.">
        <title>Complete genome sequence of Lactobacillus plantarum WCFS1.</title>
        <authorList>
            <person name="Kleerebezem M."/>
            <person name="Boekhorst J."/>
            <person name="van Kranenburg R."/>
            <person name="Molenaar D."/>
            <person name="Kuipers O.P."/>
            <person name="Leer R."/>
            <person name="Tarchini R."/>
            <person name="Peters S.A."/>
            <person name="Sandbrink H.M."/>
            <person name="Fiers M.W.E.J."/>
            <person name="Stiekema W."/>
            <person name="Klein Lankhorst R.M."/>
            <person name="Bron P.A."/>
            <person name="Hoffer S.M."/>
            <person name="Nierop Groot M.N."/>
            <person name="Kerkhoven R."/>
            <person name="De Vries M."/>
            <person name="Ursing B."/>
            <person name="De Vos W.M."/>
            <person name="Siezen R.J."/>
        </authorList>
    </citation>
    <scope>NUCLEOTIDE SEQUENCE [LARGE SCALE GENOMIC DNA]</scope>
    <source>
        <strain>ATCC BAA-793 / NCIMB 8826 / WCFS1</strain>
    </source>
</reference>
<reference key="2">
    <citation type="journal article" date="2012" name="J. Bacteriol.">
        <title>Complete resequencing and reannotation of the Lactobacillus plantarum WCFS1 genome.</title>
        <authorList>
            <person name="Siezen R.J."/>
            <person name="Francke C."/>
            <person name="Renckens B."/>
            <person name="Boekhorst J."/>
            <person name="Wels M."/>
            <person name="Kleerebezem M."/>
            <person name="van Hijum S.A."/>
        </authorList>
    </citation>
    <scope>NUCLEOTIDE SEQUENCE [LARGE SCALE GENOMIC DNA]</scope>
    <scope>GENOME REANNOTATION</scope>
    <source>
        <strain>ATCC BAA-793 / NCIMB 8826 / WCFS1</strain>
    </source>
</reference>
<accession>Q88VW2</accession>
<accession>F9UPP2</accession>